<dbReference type="EC" id="2.1.2.9" evidence="1"/>
<dbReference type="EMBL" id="FM180568">
    <property type="protein sequence ID" value="CAS11098.1"/>
    <property type="molecule type" value="Genomic_DNA"/>
</dbReference>
<dbReference type="RefSeq" id="WP_000004454.1">
    <property type="nucleotide sequence ID" value="NC_011601.1"/>
</dbReference>
<dbReference type="SMR" id="B7UK11"/>
<dbReference type="KEGG" id="ecg:E2348C_3550"/>
<dbReference type="HOGENOM" id="CLU_033347_1_2_6"/>
<dbReference type="Proteomes" id="UP000008205">
    <property type="component" value="Chromosome"/>
</dbReference>
<dbReference type="GO" id="GO:0005829">
    <property type="term" value="C:cytosol"/>
    <property type="evidence" value="ECO:0007669"/>
    <property type="project" value="TreeGrafter"/>
</dbReference>
<dbReference type="GO" id="GO:0004479">
    <property type="term" value="F:methionyl-tRNA formyltransferase activity"/>
    <property type="evidence" value="ECO:0007669"/>
    <property type="project" value="UniProtKB-UniRule"/>
</dbReference>
<dbReference type="CDD" id="cd08646">
    <property type="entry name" value="FMT_core_Met-tRNA-FMT_N"/>
    <property type="match status" value="1"/>
</dbReference>
<dbReference type="CDD" id="cd08704">
    <property type="entry name" value="Met_tRNA_FMT_C"/>
    <property type="match status" value="1"/>
</dbReference>
<dbReference type="FunFam" id="3.10.25.10:FF:000001">
    <property type="entry name" value="Methionyl-tRNA formyltransferase"/>
    <property type="match status" value="1"/>
</dbReference>
<dbReference type="FunFam" id="3.40.50.170:FF:000003">
    <property type="entry name" value="Methionyl-tRNA formyltransferase"/>
    <property type="match status" value="1"/>
</dbReference>
<dbReference type="Gene3D" id="3.10.25.10">
    <property type="entry name" value="Formyl transferase, C-terminal domain"/>
    <property type="match status" value="1"/>
</dbReference>
<dbReference type="Gene3D" id="3.40.50.170">
    <property type="entry name" value="Formyl transferase, N-terminal domain"/>
    <property type="match status" value="1"/>
</dbReference>
<dbReference type="HAMAP" id="MF_00182">
    <property type="entry name" value="Formyl_trans"/>
    <property type="match status" value="1"/>
</dbReference>
<dbReference type="InterPro" id="IPR005794">
    <property type="entry name" value="Fmt"/>
</dbReference>
<dbReference type="InterPro" id="IPR005793">
    <property type="entry name" value="Formyl_trans_C"/>
</dbReference>
<dbReference type="InterPro" id="IPR037022">
    <property type="entry name" value="Formyl_trans_C_sf"/>
</dbReference>
<dbReference type="InterPro" id="IPR002376">
    <property type="entry name" value="Formyl_transf_N"/>
</dbReference>
<dbReference type="InterPro" id="IPR036477">
    <property type="entry name" value="Formyl_transf_N_sf"/>
</dbReference>
<dbReference type="InterPro" id="IPR011034">
    <property type="entry name" value="Formyl_transferase-like_C_sf"/>
</dbReference>
<dbReference type="InterPro" id="IPR001555">
    <property type="entry name" value="GART_AS"/>
</dbReference>
<dbReference type="InterPro" id="IPR044135">
    <property type="entry name" value="Met-tRNA-FMT_C"/>
</dbReference>
<dbReference type="InterPro" id="IPR041711">
    <property type="entry name" value="Met-tRNA-FMT_N"/>
</dbReference>
<dbReference type="NCBIfam" id="TIGR00460">
    <property type="entry name" value="fmt"/>
    <property type="match status" value="1"/>
</dbReference>
<dbReference type="PANTHER" id="PTHR11138">
    <property type="entry name" value="METHIONYL-TRNA FORMYLTRANSFERASE"/>
    <property type="match status" value="1"/>
</dbReference>
<dbReference type="PANTHER" id="PTHR11138:SF5">
    <property type="entry name" value="METHIONYL-TRNA FORMYLTRANSFERASE, MITOCHONDRIAL"/>
    <property type="match status" value="1"/>
</dbReference>
<dbReference type="Pfam" id="PF02911">
    <property type="entry name" value="Formyl_trans_C"/>
    <property type="match status" value="1"/>
</dbReference>
<dbReference type="Pfam" id="PF00551">
    <property type="entry name" value="Formyl_trans_N"/>
    <property type="match status" value="1"/>
</dbReference>
<dbReference type="SUPFAM" id="SSF50486">
    <property type="entry name" value="FMT C-terminal domain-like"/>
    <property type="match status" value="1"/>
</dbReference>
<dbReference type="SUPFAM" id="SSF53328">
    <property type="entry name" value="Formyltransferase"/>
    <property type="match status" value="1"/>
</dbReference>
<dbReference type="PROSITE" id="PS00373">
    <property type="entry name" value="GART"/>
    <property type="match status" value="1"/>
</dbReference>
<gene>
    <name evidence="1" type="primary">fmt</name>
    <name type="ordered locus">E2348C_3550</name>
</gene>
<reference key="1">
    <citation type="journal article" date="2009" name="J. Bacteriol.">
        <title>Complete genome sequence and comparative genome analysis of enteropathogenic Escherichia coli O127:H6 strain E2348/69.</title>
        <authorList>
            <person name="Iguchi A."/>
            <person name="Thomson N.R."/>
            <person name="Ogura Y."/>
            <person name="Saunders D."/>
            <person name="Ooka T."/>
            <person name="Henderson I.R."/>
            <person name="Harris D."/>
            <person name="Asadulghani M."/>
            <person name="Kurokawa K."/>
            <person name="Dean P."/>
            <person name="Kenny B."/>
            <person name="Quail M.A."/>
            <person name="Thurston S."/>
            <person name="Dougan G."/>
            <person name="Hayashi T."/>
            <person name="Parkhill J."/>
            <person name="Frankel G."/>
        </authorList>
    </citation>
    <scope>NUCLEOTIDE SEQUENCE [LARGE SCALE GENOMIC DNA]</scope>
    <source>
        <strain>E2348/69 / EPEC</strain>
    </source>
</reference>
<keyword id="KW-0648">Protein biosynthesis</keyword>
<keyword id="KW-1185">Reference proteome</keyword>
<keyword id="KW-0808">Transferase</keyword>
<accession>B7UK11</accession>
<protein>
    <recommendedName>
        <fullName evidence="1">Methionyl-tRNA formyltransferase</fullName>
        <ecNumber evidence="1">2.1.2.9</ecNumber>
    </recommendedName>
</protein>
<proteinExistence type="inferred from homology"/>
<sequence>MSESLRIIFAGTPDFAARHLDALLSSGHNVVGVFTQPDRPAGRGKKLMPSPVKVLAEEKGLPVFQPVSLRPQENQQLVADLQADVMVVVAYGLILPKAVLEMPRLGCINVHGSLLPRWRGAAPIQRSLWAGDAETGVTIMQMDVGLDTGDMLYKLSCPITAEDTSGTLYDKLAELGPQGLITTLKQLADGTAKPEVQDETLVTYAEKLSKEEARIDWSLSAAQLERCIRAFNPWPMSWLEIEGQPVKVWKASVIDTATNAAPGTILEANKQGIQVATGDGILNLLSLQPAGKKAMSAQDLLNSRREWFVPGNRLV</sequence>
<feature type="chain" id="PRO_1000190024" description="Methionyl-tRNA formyltransferase">
    <location>
        <begin position="1"/>
        <end position="315"/>
    </location>
</feature>
<feature type="binding site" evidence="1">
    <location>
        <begin position="113"/>
        <end position="116"/>
    </location>
    <ligand>
        <name>(6S)-5,6,7,8-tetrahydrofolate</name>
        <dbReference type="ChEBI" id="CHEBI:57453"/>
    </ligand>
</feature>
<organism>
    <name type="scientific">Escherichia coli O127:H6 (strain E2348/69 / EPEC)</name>
    <dbReference type="NCBI Taxonomy" id="574521"/>
    <lineage>
        <taxon>Bacteria</taxon>
        <taxon>Pseudomonadati</taxon>
        <taxon>Pseudomonadota</taxon>
        <taxon>Gammaproteobacteria</taxon>
        <taxon>Enterobacterales</taxon>
        <taxon>Enterobacteriaceae</taxon>
        <taxon>Escherichia</taxon>
    </lineage>
</organism>
<name>FMT_ECO27</name>
<comment type="function">
    <text evidence="1">Attaches a formyl group to the free amino group of methionyl-tRNA(fMet). The formyl group appears to play a dual role in the initiator identity of N-formylmethionyl-tRNA by promoting its recognition by IF2 and preventing the misappropriation of this tRNA by the elongation apparatus.</text>
</comment>
<comment type="catalytic activity">
    <reaction evidence="1">
        <text>L-methionyl-tRNA(fMet) + (6R)-10-formyltetrahydrofolate = N-formyl-L-methionyl-tRNA(fMet) + (6S)-5,6,7,8-tetrahydrofolate + H(+)</text>
        <dbReference type="Rhea" id="RHEA:24380"/>
        <dbReference type="Rhea" id="RHEA-COMP:9952"/>
        <dbReference type="Rhea" id="RHEA-COMP:9953"/>
        <dbReference type="ChEBI" id="CHEBI:15378"/>
        <dbReference type="ChEBI" id="CHEBI:57453"/>
        <dbReference type="ChEBI" id="CHEBI:78530"/>
        <dbReference type="ChEBI" id="CHEBI:78844"/>
        <dbReference type="ChEBI" id="CHEBI:195366"/>
        <dbReference type="EC" id="2.1.2.9"/>
    </reaction>
</comment>
<comment type="similarity">
    <text evidence="1">Belongs to the Fmt family.</text>
</comment>
<evidence type="ECO:0000255" key="1">
    <source>
        <dbReference type="HAMAP-Rule" id="MF_00182"/>
    </source>
</evidence>